<name>HGC1_CANAL</name>
<reference key="1">
    <citation type="journal article" date="2004" name="Proc. Natl. Acad. Sci. U.S.A.">
        <title>The diploid genome sequence of Candida albicans.</title>
        <authorList>
            <person name="Jones T."/>
            <person name="Federspiel N.A."/>
            <person name="Chibana H."/>
            <person name="Dungan J."/>
            <person name="Kalman S."/>
            <person name="Magee B.B."/>
            <person name="Newport G."/>
            <person name="Thorstenson Y.R."/>
            <person name="Agabian N."/>
            <person name="Magee P.T."/>
            <person name="Davis R.W."/>
            <person name="Scherer S."/>
        </authorList>
    </citation>
    <scope>NUCLEOTIDE SEQUENCE [LARGE SCALE GENOMIC DNA]</scope>
    <source>
        <strain>SC5314 / ATCC MYA-2876</strain>
    </source>
</reference>
<reference key="2">
    <citation type="journal article" date="2007" name="Genome Biol.">
        <title>Assembly of the Candida albicans genome into sixteen supercontigs aligned on the eight chromosomes.</title>
        <authorList>
            <person name="van het Hoog M."/>
            <person name="Rast T.J."/>
            <person name="Martchenko M."/>
            <person name="Grindle S."/>
            <person name="Dignard D."/>
            <person name="Hogues H."/>
            <person name="Cuomo C."/>
            <person name="Berriman M."/>
            <person name="Scherer S."/>
            <person name="Magee B.B."/>
            <person name="Whiteway M."/>
            <person name="Chibana H."/>
            <person name="Nantel A."/>
            <person name="Magee P.T."/>
        </authorList>
    </citation>
    <scope>GENOME REANNOTATION</scope>
    <source>
        <strain>SC5314 / ATCC MYA-2876</strain>
    </source>
</reference>
<reference key="3">
    <citation type="journal article" date="2013" name="Genome Biol.">
        <title>Assembly of a phased diploid Candida albicans genome facilitates allele-specific measurements and provides a simple model for repeat and indel structure.</title>
        <authorList>
            <person name="Muzzey D."/>
            <person name="Schwartz K."/>
            <person name="Weissman J.S."/>
            <person name="Sherlock G."/>
        </authorList>
    </citation>
    <scope>NUCLEOTIDE SEQUENCE [LARGE SCALE GENOMIC DNA]</scope>
    <scope>GENOME REANNOTATION</scope>
    <source>
        <strain>SC5314 / ATCC MYA-2876</strain>
    </source>
</reference>
<reference key="4">
    <citation type="journal article" date="2004" name="EMBO J.">
        <title>Hgc1, a novel hypha-specific G1 cyclin-related protein regulates Candida albicans hyphal morphogenesis.</title>
        <authorList>
            <person name="Zheng X."/>
            <person name="Wang Y."/>
            <person name="Wang Y."/>
        </authorList>
    </citation>
    <scope>FUNCTION</scope>
    <scope>INDUCTION</scope>
    <scope>INTERACTION WITH CDC28</scope>
</reference>
<reference key="5">
    <citation type="journal article" date="2005" name="Eukaryot. Cell">
        <title>The G1 cyclin Cln3 regulates morphogenesis in Candida albicans.</title>
        <authorList>
            <person name="Chapa y Lazo B."/>
            <person name="Bates S."/>
            <person name="Sudbery P."/>
        </authorList>
    </citation>
    <scope>INDUCTION</scope>
</reference>
<reference key="6">
    <citation type="journal article" date="2005" name="Eukaryot. Cell">
        <title>Regulation of the Cdc42/Cdc24 GTPase module during Candida albicans hyphal growth.</title>
        <authorList>
            <person name="Bassilana M."/>
            <person name="Hopkins J."/>
            <person name="Arkowitz R.A."/>
        </authorList>
    </citation>
    <scope>INDUCTION</scope>
</reference>
<reference key="7">
    <citation type="journal article" date="2005" name="Eukaryot. Cell">
        <title>Release from quorum-sensing molecules triggers hyphal formation during Candida albicans resumption of growth.</title>
        <authorList>
            <person name="Enjalbert B."/>
            <person name="Whiteway M."/>
        </authorList>
    </citation>
    <scope>INDUCTION</scope>
</reference>
<reference key="8">
    <citation type="journal article" date="2005" name="Microbiology">
        <title>A putative dual-specific protein phosphatase encoded by YVH1 controls growth, filamentation and virulence in Candida albicans.</title>
        <authorList>
            <person name="Hanaoka N."/>
            <person name="Umeyama T."/>
            <person name="Ueno K."/>
            <person name="Ueda K."/>
            <person name="Beppu T."/>
            <person name="Fugo H."/>
            <person name="Uehara Y."/>
            <person name="Niimi M."/>
        </authorList>
    </citation>
    <scope>INDUCTION</scope>
</reference>
<reference key="9">
    <citation type="journal article" date="2006" name="Eukaryot. Cell">
        <title>Tcc1p, a novel protein containing the tetratricopeptide repeat motif, interacts with Tup1p to regulate morphological transition and virulence in Candida albicans.</title>
        <authorList>
            <person name="Kaneko A."/>
            <person name="Umeyama T."/>
            <person name="Utena-Abe Y."/>
            <person name="Yamagoe S."/>
            <person name="Niimi M."/>
            <person name="Uehara Y."/>
        </authorList>
    </citation>
    <scope>FUNCTION</scope>
    <scope>INDUCTION</scope>
</reference>
<reference key="10">
    <citation type="journal article" date="2006" name="Mol. Biol. Cell">
        <title>The Flo8 transcription factor is essential for hyphal development and virulence in Candida albicans.</title>
        <authorList>
            <person name="Cao F."/>
            <person name="Lane S."/>
            <person name="Raniga P.P."/>
            <person name="Lu Y."/>
            <person name="Zhou Z."/>
            <person name="Ramon K."/>
            <person name="Chen J."/>
            <person name="Liu H."/>
        </authorList>
    </citation>
    <scope>INDUCTION</scope>
</reference>
<reference key="11">
    <citation type="journal article" date="2006" name="Mol. Microbiol.">
        <title>Rad52 depletion in Candida albicans triggers both the DNA-damage checkpoint and filamentation accompanied by but independent of expression of hypha-specific genes.</title>
        <authorList>
            <person name="Andaluz E."/>
            <person name="Ciudad T."/>
            <person name="Gomez-Raja J."/>
            <person name="Calderone R."/>
            <person name="Larriba G."/>
        </authorList>
    </citation>
    <scope>FUNCTION</scope>
    <scope>INDUCTION</scope>
</reference>
<reference key="12">
    <citation type="journal article" date="2007" name="Dev. Cell">
        <title>Cyclin-dependent kinases control septin phosphorylation in Candida albicans hyphal development.</title>
        <authorList>
            <person name="Sinha I."/>
            <person name="Wang Y.M."/>
            <person name="Philp R."/>
            <person name="Li C.R."/>
            <person name="Yap W.H."/>
            <person name="Wang Y."/>
        </authorList>
    </citation>
    <scope>INTERACTION WITH CDC28</scope>
    <scope>FUNCTION</scope>
</reference>
<reference key="13">
    <citation type="journal article" date="2007" name="EMBO J.">
        <title>Phosphorylation of Rga2, a Cdc42 GAP, by CDK/Hgc1 is crucial for Candida albicans hyphal growth.</title>
        <authorList>
            <person name="Zheng X.D."/>
            <person name="Lee R.T."/>
            <person name="Wang Y.M."/>
            <person name="Lin Q.S."/>
            <person name="Wang Y."/>
        </authorList>
    </citation>
    <scope>FUNCTION</scope>
</reference>
<reference key="14">
    <citation type="journal article" date="2007" name="Eukaryot. Cell">
        <title>Temporal and spatial control of HGC1 expression results in Hgc1 localization to the apical cells of hyphae in Candida albicans.</title>
        <authorList>
            <person name="Wang A."/>
            <person name="Lane S."/>
            <person name="Tian Z."/>
            <person name="Sharon A."/>
            <person name="Hazan I."/>
            <person name="Liu H."/>
        </authorList>
    </citation>
    <scope>INDUCTION</scope>
</reference>
<reference key="15">
    <citation type="journal article" date="2008" name="Mol. Biol. Cell">
        <title>Sep7 is essential to modify septin ring dynamics and inhibit cell separation during Candida albicans hyphal growth.</title>
        <authorList>
            <person name="Gonzalez-Novo A."/>
            <person name="Correa-Bordes J."/>
            <person name="Labrador L."/>
            <person name="Sanchez M."/>
            <person name="Vazquez de Aldana C.R."/>
            <person name="Jimenez J."/>
        </authorList>
    </citation>
    <scope>FUNCTION</scope>
</reference>
<reference key="16">
    <citation type="journal article" date="2009" name="FEMS Yeast Res.">
        <title>UME6 is a crucial downstream target of other transcriptional regulators of true hyphal development in Candida albicans.</title>
        <authorList>
            <person name="Zeidler U."/>
            <person name="Lettner T."/>
            <person name="Lassnig C."/>
            <person name="Muller M."/>
            <person name="Lajko R."/>
            <person name="Hintner H."/>
            <person name="Breitenbach M."/>
            <person name="Bito A."/>
        </authorList>
    </citation>
    <scope>INDUCTION</scope>
</reference>
<reference key="17">
    <citation type="journal article" date="2009" name="Mol. Cell. Biol.">
        <title>Hyphal chain formation in Candida albicans: Cdc28-Hgc1 phosphorylation of Efg1 represses cell separation genes.</title>
        <authorList>
            <person name="Wang A."/>
            <person name="Raniga P.P."/>
            <person name="Lane S."/>
            <person name="Lu Y."/>
            <person name="Liu H."/>
        </authorList>
    </citation>
    <scope>FUNCTION</scope>
</reference>
<reference key="18">
    <citation type="journal article" date="2010" name="EMBO J.">
        <title>Hyphal growth in Candida albicans requires the phosphorylation of Sec2 by the Cdc28-Ccn1/Hgc1 kinase.</title>
        <authorList>
            <person name="Bishop A."/>
            <person name="Lane R."/>
            <person name="Beniston R."/>
            <person name="Chapa-y-Lazo B."/>
            <person name="Smythe C."/>
            <person name="Sudbery P."/>
        </authorList>
    </citation>
    <scope>FUNCTION</scope>
</reference>
<reference key="19">
    <citation type="journal article" date="2010" name="Eukaryot. Cell">
        <title>Hgc1 mediates dynamic Candida albicans-endothelium adhesion events during circulation.</title>
        <authorList>
            <person name="Wilson D."/>
            <person name="Hube B."/>
        </authorList>
    </citation>
    <scope>FUNCTION</scope>
</reference>
<reference key="20">
    <citation type="journal article" date="2010" name="Eukaryot. Cell">
        <title>Candida albicans Ume6, a filament-specific transcriptional regulator, directs hyphal growth via a pathway involving Hgc1 cyclin-related protein.</title>
        <authorList>
            <person name="Carlisle P.L."/>
            <person name="Kadosh D."/>
        </authorList>
    </citation>
    <scope>FUNCTION</scope>
    <scope>INDUCTION</scope>
</reference>
<reference key="21">
    <citation type="journal article" date="2011" name="PLoS ONE">
        <title>From attachment to damage: defined genes of Candida albicans mediate adhesion, invasion and damage during interaction with oral epithelial cells.</title>
        <authorList>
            <person name="Wachtler B."/>
            <person name="Wilson D."/>
            <person name="Haedicke K."/>
            <person name="Dalle F."/>
            <person name="Hube B."/>
        </authorList>
    </citation>
    <scope>FUNCTION</scope>
</reference>
<reference key="22">
    <citation type="journal article" date="2013" name="Eukaryot. Cell">
        <title>Expression of UME6, a key regulator of Candida albicans hyphal development, enhances biofilm formation via Hgc1- and Sun41-dependent mechanisms.</title>
        <authorList>
            <person name="Banerjee M."/>
            <person name="Uppuluri P."/>
            <person name="Zhao X.R."/>
            <person name="Carlisle P.L."/>
            <person name="Vipulanandan G."/>
            <person name="Villar C.C."/>
            <person name="Lopez-Ribot J.L."/>
            <person name="Kadosh D."/>
        </authorList>
    </citation>
    <scope>FUNCTION</scope>
</reference>
<reference key="23">
    <citation type="journal article" date="2013" name="Med. Mycol.">
        <title>The inhibitory activity of linalool against the filamentous growth and biofilm formation in Candida albicans.</title>
        <authorList>
            <person name="Hsu C.C."/>
            <person name="Lai W.L."/>
            <person name="Chuang K.C."/>
            <person name="Lee M.H."/>
            <person name="Tsai Y.C."/>
        </authorList>
    </citation>
    <scope>INDUCTION</scope>
</reference>
<reference key="24">
    <citation type="journal article" date="2013" name="Mol. Biol. Cell">
        <title>A genome-wide transcriptional analysis of morphology determination in Candida albicans.</title>
        <authorList>
            <person name="Carlisle P.L."/>
            <person name="Kadosh D."/>
        </authorList>
    </citation>
    <scope>INDUCTION</scope>
</reference>
<reference key="25">
    <citation type="journal article" date="2013" name="Mol. Microbiol.">
        <title>Bcr1 plays a central role in the regulation of opaque cell filamentation in Candida albicans.</title>
        <authorList>
            <person name="Guan G."/>
            <person name="Xie J."/>
            <person name="Tao L."/>
            <person name="Nobile C.J."/>
            <person name="Sun Y."/>
            <person name="Cao C."/>
            <person name="Tong Y."/>
            <person name="Huang G."/>
        </authorList>
    </citation>
    <scope>FUNCTION</scope>
</reference>
<reference key="26">
    <citation type="journal article" date="2013" name="PLoS Pathog.">
        <title>Candida albicans white and opaque cells undergo distinct programs of filamentous growth.</title>
        <authorList>
            <person name="Si H."/>
            <person name="Hernday A.D."/>
            <person name="Hirakawa M.P."/>
            <person name="Johnson A.D."/>
            <person name="Bennett R.J."/>
        </authorList>
    </citation>
    <scope>FUNCTION</scope>
</reference>
<reference key="27">
    <citation type="journal article" date="2013" name="PLoS Pathog.">
        <title>Genetic control of conventional and pheromone-stimulated biofilm formation in Candida albicans.</title>
        <authorList>
            <person name="Lin C.H."/>
            <person name="Kabrawala S."/>
            <person name="Fox E.P."/>
            <person name="Nobile C.J."/>
            <person name="Johnson A.D."/>
            <person name="Bennett R.J."/>
        </authorList>
    </citation>
    <scope>FUNCTION</scope>
</reference>
<gene>
    <name type="primary">HGC1</name>
    <name type="synonym">CLN21</name>
    <name type="synonym">CLN3</name>
    <name type="ordered locus">CAALFM_C100780CA</name>
    <name type="ORF">CaO19.13449</name>
    <name type="ORF">CaO19.6028</name>
</gene>
<sequence>MINITKPLTPKSISQQKQQQQHPYKNISTTKSNNNPQASGSKSFVQEKYPSQLYESEIKIHNQSLAEYDLDIYDIMVNLIETNKPNLSLYKQQPYLTFTIRLKLIDFLLKMSIRLKILPFVFFKAVKIFDRYCSKRIVLLDQSQLIITTCLWIASKVMGGNNHFVNINNLDKIGHENFRTINDLGYGCGGKYLGPTERFRLPKLHELVKLCGAKCKYDQGMFKQMEVHVLNTLEWSLNDPSIEEFIIDSHEFNVININNNNEYEQTITTNDESANANANDGNEFFKIKEFLSYAALYSHDLIDTNIIELGQVIMDLINETFQLQPFDKHYQTILNCDSDHPIRFDMQRYKHIKKAVIKSVLNASDFMMKVFHSKGPQFIYQQFNLQYKLNYTTNSIIGGFGNSGYSPTTTTTTTTSDNISTTPTSSTGSTTPVSSYIGYANSRSSSVSSTSSVASSSNANTPSSSCSTTSTTPLGMTPHKRQKNYSNYSNYSNYSNSSTSLGLTNNNNNNTTISPVDSTTINSHTKNSSQLNYQYHNGGSNNNNHHHHHKPSLSVSIPPPQMHSHHHSSTVYQMVTPPNSANKNSNKSNSANNNNTTTIATTTTTTTNNNNNSQLPAPHQLSYNNYFNSPNMQPPPPMKYTPGRKQQQQQNQGQNQQQPLQLYQGDNNNNGTNTNSKFNSIAGSRAVSSSSSSAVSIASSISTNNYDKYDDDDDDDNSNDLFSSSRRFMNYSNYSSSTINGSVMSGVINNNSGNGKGNGNGGSGTPISENDSPIYTKTRLCNMIH</sequence>
<feature type="chain" id="PRO_0000424340" description="Hypha-specific G1 cyclin-related protein 1">
    <location>
        <begin position="1"/>
        <end position="785"/>
    </location>
</feature>
<feature type="domain" description="Cyclin N-terminal">
    <location>
        <begin position="71"/>
        <end position="238"/>
    </location>
</feature>
<feature type="region of interest" description="Disordered" evidence="1">
    <location>
        <begin position="1"/>
        <end position="42"/>
    </location>
</feature>
<feature type="region of interest" description="Disordered" evidence="1">
    <location>
        <begin position="408"/>
        <end position="433"/>
    </location>
</feature>
<feature type="region of interest" description="Disordered" evidence="1">
    <location>
        <begin position="447"/>
        <end position="679"/>
    </location>
</feature>
<feature type="region of interest" description="Disordered" evidence="1">
    <location>
        <begin position="750"/>
        <end position="774"/>
    </location>
</feature>
<feature type="compositionally biased region" description="Polar residues" evidence="1">
    <location>
        <begin position="22"/>
        <end position="42"/>
    </location>
</feature>
<feature type="compositionally biased region" description="Low complexity" evidence="1">
    <location>
        <begin position="447"/>
        <end position="473"/>
    </location>
</feature>
<feature type="compositionally biased region" description="Low complexity" evidence="1">
    <location>
        <begin position="484"/>
        <end position="512"/>
    </location>
</feature>
<feature type="compositionally biased region" description="Polar residues" evidence="1">
    <location>
        <begin position="513"/>
        <end position="535"/>
    </location>
</feature>
<feature type="compositionally biased region" description="Low complexity" evidence="1">
    <location>
        <begin position="579"/>
        <end position="613"/>
    </location>
</feature>
<feature type="compositionally biased region" description="Polar residues" evidence="1">
    <location>
        <begin position="621"/>
        <end position="631"/>
    </location>
</feature>
<feature type="compositionally biased region" description="Low complexity" evidence="1">
    <location>
        <begin position="646"/>
        <end position="679"/>
    </location>
</feature>
<feature type="compositionally biased region" description="Gly residues" evidence="1">
    <location>
        <begin position="754"/>
        <end position="764"/>
    </location>
</feature>
<feature type="compositionally biased region" description="Polar residues" evidence="1">
    <location>
        <begin position="765"/>
        <end position="774"/>
    </location>
</feature>
<keyword id="KW-0131">Cell cycle</keyword>
<keyword id="KW-0132">Cell division</keyword>
<keyword id="KW-0195">Cyclin</keyword>
<keyword id="KW-1185">Reference proteome</keyword>
<keyword id="KW-0843">Virulence</keyword>
<organism>
    <name type="scientific">Candida albicans (strain SC5314 / ATCC MYA-2876)</name>
    <name type="common">Yeast</name>
    <dbReference type="NCBI Taxonomy" id="237561"/>
    <lineage>
        <taxon>Eukaryota</taxon>
        <taxon>Fungi</taxon>
        <taxon>Dikarya</taxon>
        <taxon>Ascomycota</taxon>
        <taxon>Saccharomycotina</taxon>
        <taxon>Pichiomycetes</taxon>
        <taxon>Debaryomycetaceae</taxon>
        <taxon>Candida/Lodderomyces clade</taxon>
        <taxon>Candida</taxon>
    </lineage>
</organism>
<comment type="function">
    <text evidence="2 8 9 11 12 13 15 16 17 18 19 21 23 24 25">Hypha-specific G1 cyclin-related protein involved in regulation of morphogenesis and opaque cells filamentous growth, and required for both conventional and pheromone-stimulated biofilm formation. Required to maintain hyphal tip localization of actin and SPA2. Regulates the CDC28 kinase during hyphal growth. The CDC28-HGC1 complex phosphorylates and prevents RGA2 from localizing to hyphal tips, leading to localized CDC42 activation for hyphal extension. The CDC28-HGC1 complex also phosphorylates SEC2 and maintains CDC11 phosphorylation throughout hyphal growth. Moreover CDC28-HGC1 phosphorylation of EFG1 represses cell separation genes during hyphal growth. Also partially controls SEP7 phosphorylation status and subsequent septin ring dynamics. Required for virulence and especially mediates dynamic adhesion to endothelium of blood vessels during circulation.</text>
</comment>
<comment type="subunit">
    <text evidence="2 12">Interacts with CDC28.</text>
</comment>
<comment type="induction">
    <text evidence="2 3 4 5 6 7 8 9 10 14 18 20 22">Transcript is detected only in the apical cells of hyphae, suggesting that HGC1 is transcribed in the apical cell. Induced during hyphal formation and upon exposure to host serum. Expression is regulated by the cAMP/PKA pathway, EFG1, FLO8, SSN6, RAD52, TUP1, and UME6. Repressed by farnesol and linalool.</text>
</comment>
<comment type="similarity">
    <text evidence="26">Belongs to the cyclin family.</text>
</comment>
<dbReference type="EMBL" id="CP017623">
    <property type="protein sequence ID" value="AOW25775.1"/>
    <property type="molecule type" value="Genomic_DNA"/>
</dbReference>
<dbReference type="RefSeq" id="XP_718990.2">
    <property type="nucleotide sequence ID" value="XM_713897.2"/>
</dbReference>
<dbReference type="SMR" id="Q5ABE2"/>
<dbReference type="BioGRID" id="1222443">
    <property type="interactions" value="4"/>
</dbReference>
<dbReference type="IntAct" id="Q5ABE2">
    <property type="interactions" value="2"/>
</dbReference>
<dbReference type="MINT" id="Q5ABE2"/>
<dbReference type="STRING" id="237561.Q5ABE2"/>
<dbReference type="EnsemblFungi" id="C1_00780C_A-T">
    <property type="protein sequence ID" value="C1_00780C_A-T-p1"/>
    <property type="gene ID" value="C1_00780C_A"/>
</dbReference>
<dbReference type="GeneID" id="3639349"/>
<dbReference type="KEGG" id="cal:CAALFM_C100780CA"/>
<dbReference type="CGD" id="CAL0000184055">
    <property type="gene designation" value="HGC1"/>
</dbReference>
<dbReference type="VEuPathDB" id="FungiDB:C1_00780C_A"/>
<dbReference type="eggNOG" id="KOG0653">
    <property type="taxonomic scope" value="Eukaryota"/>
</dbReference>
<dbReference type="HOGENOM" id="CLU_019984_0_0_1"/>
<dbReference type="InParanoid" id="Q5ABE2"/>
<dbReference type="OrthoDB" id="5590282at2759"/>
<dbReference type="PHI-base" id="PHI:123272"/>
<dbReference type="PHI-base" id="PHI:3506"/>
<dbReference type="PHI-base" id="PHI:357"/>
<dbReference type="PRO" id="PR:Q5ABE2"/>
<dbReference type="Proteomes" id="UP000000559">
    <property type="component" value="Chromosome 1"/>
</dbReference>
<dbReference type="GO" id="GO:0004672">
    <property type="term" value="F:protein kinase activity"/>
    <property type="evidence" value="ECO:0000315"/>
    <property type="project" value="CGD"/>
</dbReference>
<dbReference type="GO" id="GO:0051301">
    <property type="term" value="P:cell division"/>
    <property type="evidence" value="ECO:0007669"/>
    <property type="project" value="UniProtKB-KW"/>
</dbReference>
<dbReference type="GO" id="GO:0036244">
    <property type="term" value="P:cellular response to neutral pH"/>
    <property type="evidence" value="ECO:0000315"/>
    <property type="project" value="CGD"/>
</dbReference>
<dbReference type="GO" id="GO:0044114">
    <property type="term" value="P:development of symbiont in host"/>
    <property type="evidence" value="ECO:0000315"/>
    <property type="project" value="CGD"/>
</dbReference>
<dbReference type="GO" id="GO:0030447">
    <property type="term" value="P:filamentous growth"/>
    <property type="evidence" value="ECO:0000315"/>
    <property type="project" value="CGD"/>
</dbReference>
<dbReference type="GO" id="GO:0044182">
    <property type="term" value="P:filamentous growth of a population of unicellular organisms"/>
    <property type="evidence" value="ECO:0000315"/>
    <property type="project" value="CGD"/>
</dbReference>
<dbReference type="GO" id="GO:0036180">
    <property type="term" value="P:filamentous growth of a population of unicellular organisms in response to biotic stimulus"/>
    <property type="evidence" value="ECO:0000315"/>
    <property type="project" value="CGD"/>
</dbReference>
<dbReference type="GO" id="GO:0036178">
    <property type="term" value="P:filamentous growth of a population of unicellular organisms in response to neutral pH"/>
    <property type="evidence" value="ECO:0000315"/>
    <property type="project" value="CGD"/>
</dbReference>
<dbReference type="GO" id="GO:0090033">
    <property type="term" value="P:positive regulation of filamentous growth"/>
    <property type="evidence" value="ECO:0000315"/>
    <property type="project" value="CGD"/>
</dbReference>
<dbReference type="GO" id="GO:1900430">
    <property type="term" value="P:positive regulation of filamentous growth of a population of unicellular organisms"/>
    <property type="evidence" value="ECO:0000315"/>
    <property type="project" value="CGD"/>
</dbReference>
<dbReference type="GO" id="GO:1900445">
    <property type="term" value="P:positive regulation of filamentous growth of a population of unicellular organisms in response to biotic stimulus"/>
    <property type="evidence" value="ECO:0000315"/>
    <property type="project" value="CGD"/>
</dbReference>
<dbReference type="GO" id="GO:1900442">
    <property type="term" value="P:positive regulation of filamentous growth of a population of unicellular organisms in response to neutral pH"/>
    <property type="evidence" value="ECO:0000315"/>
    <property type="project" value="CGD"/>
</dbReference>
<dbReference type="GO" id="GO:1900743">
    <property type="term" value="P:positive regulation of filamentous growth of a population of unicellular organisms in response to pH"/>
    <property type="evidence" value="ECO:0000315"/>
    <property type="project" value="CGD"/>
</dbReference>
<dbReference type="GO" id="GO:0044010">
    <property type="term" value="P:single-species biofilm formation"/>
    <property type="evidence" value="ECO:0000315"/>
    <property type="project" value="CGD"/>
</dbReference>
<dbReference type="GO" id="GO:0044011">
    <property type="term" value="P:single-species biofilm formation on inanimate substrate"/>
    <property type="evidence" value="ECO:0000315"/>
    <property type="project" value="CGD"/>
</dbReference>
<dbReference type="Gene3D" id="1.10.472.10">
    <property type="entry name" value="Cyclin-like"/>
    <property type="match status" value="1"/>
</dbReference>
<dbReference type="InterPro" id="IPR013763">
    <property type="entry name" value="Cyclin-like_dom"/>
</dbReference>
<dbReference type="InterPro" id="IPR036915">
    <property type="entry name" value="Cyclin-like_sf"/>
</dbReference>
<dbReference type="InterPro" id="IPR006671">
    <property type="entry name" value="Cyclin_N"/>
</dbReference>
<dbReference type="InterPro" id="IPR048258">
    <property type="entry name" value="Cyclins_cyclin-box"/>
</dbReference>
<dbReference type="PANTHER" id="PTHR21615">
    <property type="entry name" value="CYCLIN N-TERMINAL DOMAIN-CONTAINING PROTEIN 1"/>
    <property type="match status" value="1"/>
</dbReference>
<dbReference type="PANTHER" id="PTHR21615:SF2">
    <property type="entry name" value="CYCLIN N-TERMINAL DOMAIN-CONTAINING PROTEIN 1"/>
    <property type="match status" value="1"/>
</dbReference>
<dbReference type="Pfam" id="PF00134">
    <property type="entry name" value="Cyclin_N"/>
    <property type="match status" value="1"/>
</dbReference>
<dbReference type="SMART" id="SM00385">
    <property type="entry name" value="CYCLIN"/>
    <property type="match status" value="1"/>
</dbReference>
<dbReference type="SUPFAM" id="SSF47954">
    <property type="entry name" value="Cyclin-like"/>
    <property type="match status" value="1"/>
</dbReference>
<dbReference type="PROSITE" id="PS00292">
    <property type="entry name" value="CYCLINS"/>
    <property type="match status" value="1"/>
</dbReference>
<accession>Q5ABE2</accession>
<accession>A0A1D8PCA7</accession>
<proteinExistence type="evidence at protein level"/>
<evidence type="ECO:0000256" key="1">
    <source>
        <dbReference type="SAM" id="MobiDB-lite"/>
    </source>
</evidence>
<evidence type="ECO:0000269" key="2">
    <source>
    </source>
</evidence>
<evidence type="ECO:0000269" key="3">
    <source>
    </source>
</evidence>
<evidence type="ECO:0000269" key="4">
    <source>
    </source>
</evidence>
<evidence type="ECO:0000269" key="5">
    <source>
    </source>
</evidence>
<evidence type="ECO:0000269" key="6">
    <source>
    </source>
</evidence>
<evidence type="ECO:0000269" key="7">
    <source>
    </source>
</evidence>
<evidence type="ECO:0000269" key="8">
    <source>
    </source>
</evidence>
<evidence type="ECO:0000269" key="9">
    <source>
    </source>
</evidence>
<evidence type="ECO:0000269" key="10">
    <source>
    </source>
</evidence>
<evidence type="ECO:0000269" key="11">
    <source>
    </source>
</evidence>
<evidence type="ECO:0000269" key="12">
    <source>
    </source>
</evidence>
<evidence type="ECO:0000269" key="13">
    <source>
    </source>
</evidence>
<evidence type="ECO:0000269" key="14">
    <source>
    </source>
</evidence>
<evidence type="ECO:0000269" key="15">
    <source>
    </source>
</evidence>
<evidence type="ECO:0000269" key="16">
    <source>
    </source>
</evidence>
<evidence type="ECO:0000269" key="17">
    <source>
    </source>
</evidence>
<evidence type="ECO:0000269" key="18">
    <source>
    </source>
</evidence>
<evidence type="ECO:0000269" key="19">
    <source>
    </source>
</evidence>
<evidence type="ECO:0000269" key="20">
    <source>
    </source>
</evidence>
<evidence type="ECO:0000269" key="21">
    <source>
    </source>
</evidence>
<evidence type="ECO:0000269" key="22">
    <source>
    </source>
</evidence>
<evidence type="ECO:0000269" key="23">
    <source>
    </source>
</evidence>
<evidence type="ECO:0000269" key="24">
    <source>
    </source>
</evidence>
<evidence type="ECO:0000269" key="25">
    <source>
    </source>
</evidence>
<evidence type="ECO:0000305" key="26"/>
<protein>
    <recommendedName>
        <fullName>Hypha-specific G1 cyclin-related protein 1</fullName>
    </recommendedName>
</protein>